<name>SP201_HUMAN</name>
<protein>
    <recommendedName>
        <fullName>Transcription factor SPT20 homolog-like 1</fullName>
    </recommendedName>
</protein>
<dbReference type="EMBL" id="AC004552">
    <property type="status" value="NOT_ANNOTATED_CDS"/>
    <property type="molecule type" value="Genomic_DNA"/>
</dbReference>
<dbReference type="EMBL" id="AY736017">
    <property type="protein sequence ID" value="AAW59547.1"/>
    <property type="molecule type" value="mRNA"/>
</dbReference>
<dbReference type="SMR" id="Q3ZLR7"/>
<dbReference type="FunCoup" id="Q3ZLR7">
    <property type="interactions" value="1"/>
</dbReference>
<dbReference type="IntAct" id="Q3ZLR7">
    <property type="interactions" value="2"/>
</dbReference>
<dbReference type="GlyGen" id="Q3ZLR7">
    <property type="glycosylation" value="1 site"/>
</dbReference>
<dbReference type="iPTMnet" id="Q3ZLR7"/>
<dbReference type="PhosphoSitePlus" id="Q3ZLR7"/>
<dbReference type="BioMuta" id="HGNC:30773"/>
<dbReference type="DMDM" id="205831478"/>
<dbReference type="MassIVE" id="Q3ZLR7"/>
<dbReference type="PeptideAtlas" id="Q3ZLR7"/>
<dbReference type="ProteomicsDB" id="61923"/>
<dbReference type="AGR" id="HGNC:30773"/>
<dbReference type="GeneCards" id="SUPT20HL1"/>
<dbReference type="HGNC" id="HGNC:30773">
    <property type="gene designation" value="SUPT20HL1"/>
</dbReference>
<dbReference type="neXtProt" id="NX_Q3ZLR7"/>
<dbReference type="InParanoid" id="Q3ZLR7"/>
<dbReference type="OrthoDB" id="1932706at2759"/>
<dbReference type="PAN-GO" id="Q3ZLR7">
    <property type="GO annotations" value="3 GO annotations based on evolutionary models"/>
</dbReference>
<dbReference type="PhylomeDB" id="Q3ZLR7"/>
<dbReference type="Pharos" id="Q3ZLR7">
    <property type="development level" value="Tdark"/>
</dbReference>
<dbReference type="PRO" id="PR:Q3ZLR7"/>
<dbReference type="Proteomes" id="UP000005640">
    <property type="component" value="Unplaced"/>
</dbReference>
<dbReference type="RNAct" id="Q3ZLR7">
    <property type="molecule type" value="protein"/>
</dbReference>
<dbReference type="GO" id="GO:0000124">
    <property type="term" value="C:SAGA complex"/>
    <property type="evidence" value="ECO:0000318"/>
    <property type="project" value="GO_Central"/>
</dbReference>
<dbReference type="GO" id="GO:0003712">
    <property type="term" value="F:transcription coregulator activity"/>
    <property type="evidence" value="ECO:0000318"/>
    <property type="project" value="GO_Central"/>
</dbReference>
<dbReference type="GO" id="GO:0006357">
    <property type="term" value="P:regulation of transcription by RNA polymerase II"/>
    <property type="evidence" value="ECO:0000318"/>
    <property type="project" value="GO_Central"/>
</dbReference>
<dbReference type="InterPro" id="IPR021950">
    <property type="entry name" value="Spt20"/>
</dbReference>
<dbReference type="InterPro" id="IPR046468">
    <property type="entry name" value="Spt20-like_SEP"/>
</dbReference>
<dbReference type="PANTHER" id="PTHR13526">
    <property type="entry name" value="TRANSCRIPTION FACTOR SPT20 HOMOLOG"/>
    <property type="match status" value="1"/>
</dbReference>
<dbReference type="PANTHER" id="PTHR13526:SF17">
    <property type="entry name" value="TRANSCRIPTION FACTOR SPT20 HOMOLOG-LIKE 1"/>
    <property type="match status" value="1"/>
</dbReference>
<dbReference type="Pfam" id="PF12090">
    <property type="entry name" value="Spt20_SEP"/>
    <property type="match status" value="1"/>
</dbReference>
<feature type="chain" id="PRO_0000344459" description="Transcription factor SPT20 homolog-like 1">
    <location>
        <begin position="1"/>
        <end position="823"/>
    </location>
</feature>
<feature type="region of interest" description="Disordered" evidence="1">
    <location>
        <begin position="246"/>
        <end position="273"/>
    </location>
</feature>
<feature type="region of interest" description="Disordered" evidence="1">
    <location>
        <begin position="369"/>
        <end position="524"/>
    </location>
</feature>
<feature type="region of interest" description="Disordered" evidence="1">
    <location>
        <begin position="560"/>
        <end position="601"/>
    </location>
</feature>
<feature type="region of interest" description="Disordered" evidence="1">
    <location>
        <begin position="631"/>
        <end position="669"/>
    </location>
</feature>
<feature type="region of interest" description="Disordered" evidence="1">
    <location>
        <begin position="720"/>
        <end position="757"/>
    </location>
</feature>
<feature type="compositionally biased region" description="Polar residues" evidence="1">
    <location>
        <begin position="423"/>
        <end position="440"/>
    </location>
</feature>
<feature type="compositionally biased region" description="Low complexity" evidence="1">
    <location>
        <begin position="469"/>
        <end position="509"/>
    </location>
</feature>
<feature type="compositionally biased region" description="Low complexity" evidence="1">
    <location>
        <begin position="568"/>
        <end position="582"/>
    </location>
</feature>
<feature type="compositionally biased region" description="Low complexity" evidence="1">
    <location>
        <begin position="636"/>
        <end position="650"/>
    </location>
</feature>
<evidence type="ECO:0000256" key="1">
    <source>
        <dbReference type="SAM" id="MobiDB-lite"/>
    </source>
</evidence>
<evidence type="ECO:0000305" key="2"/>
<accession>Q3ZLR7</accession>
<gene>
    <name type="primary">SUPT20HL1</name>
    <name type="synonym">FAM48B1</name>
</gene>
<reference key="1">
    <citation type="journal article" date="2005" name="Nature">
        <title>The DNA sequence of the human X chromosome.</title>
        <authorList>
            <person name="Ross M.T."/>
            <person name="Grafham D.V."/>
            <person name="Coffey A.J."/>
            <person name="Scherer S."/>
            <person name="McLay K."/>
            <person name="Muzny D."/>
            <person name="Platzer M."/>
            <person name="Howell G.R."/>
            <person name="Burrows C."/>
            <person name="Bird C.P."/>
            <person name="Frankish A."/>
            <person name="Lovell F.L."/>
            <person name="Howe K.L."/>
            <person name="Ashurst J.L."/>
            <person name="Fulton R.S."/>
            <person name="Sudbrak R."/>
            <person name="Wen G."/>
            <person name="Jones M.C."/>
            <person name="Hurles M.E."/>
            <person name="Andrews T.D."/>
            <person name="Scott C.E."/>
            <person name="Searle S."/>
            <person name="Ramser J."/>
            <person name="Whittaker A."/>
            <person name="Deadman R."/>
            <person name="Carter N.P."/>
            <person name="Hunt S.E."/>
            <person name="Chen R."/>
            <person name="Cree A."/>
            <person name="Gunaratne P."/>
            <person name="Havlak P."/>
            <person name="Hodgson A."/>
            <person name="Metzker M.L."/>
            <person name="Richards S."/>
            <person name="Scott G."/>
            <person name="Steffen D."/>
            <person name="Sodergren E."/>
            <person name="Wheeler D.A."/>
            <person name="Worley K.C."/>
            <person name="Ainscough R."/>
            <person name="Ambrose K.D."/>
            <person name="Ansari-Lari M.A."/>
            <person name="Aradhya S."/>
            <person name="Ashwell R.I."/>
            <person name="Babbage A.K."/>
            <person name="Bagguley C.L."/>
            <person name="Ballabio A."/>
            <person name="Banerjee R."/>
            <person name="Barker G.E."/>
            <person name="Barlow K.F."/>
            <person name="Barrett I.P."/>
            <person name="Bates K.N."/>
            <person name="Beare D.M."/>
            <person name="Beasley H."/>
            <person name="Beasley O."/>
            <person name="Beck A."/>
            <person name="Bethel G."/>
            <person name="Blechschmidt K."/>
            <person name="Brady N."/>
            <person name="Bray-Allen S."/>
            <person name="Bridgeman A.M."/>
            <person name="Brown A.J."/>
            <person name="Brown M.J."/>
            <person name="Bonnin D."/>
            <person name="Bruford E.A."/>
            <person name="Buhay C."/>
            <person name="Burch P."/>
            <person name="Burford D."/>
            <person name="Burgess J."/>
            <person name="Burrill W."/>
            <person name="Burton J."/>
            <person name="Bye J.M."/>
            <person name="Carder C."/>
            <person name="Carrel L."/>
            <person name="Chako J."/>
            <person name="Chapman J.C."/>
            <person name="Chavez D."/>
            <person name="Chen E."/>
            <person name="Chen G."/>
            <person name="Chen Y."/>
            <person name="Chen Z."/>
            <person name="Chinault C."/>
            <person name="Ciccodicola A."/>
            <person name="Clark S.Y."/>
            <person name="Clarke G."/>
            <person name="Clee C.M."/>
            <person name="Clegg S."/>
            <person name="Clerc-Blankenburg K."/>
            <person name="Clifford K."/>
            <person name="Cobley V."/>
            <person name="Cole C.G."/>
            <person name="Conquer J.S."/>
            <person name="Corby N."/>
            <person name="Connor R.E."/>
            <person name="David R."/>
            <person name="Davies J."/>
            <person name="Davis C."/>
            <person name="Davis J."/>
            <person name="Delgado O."/>
            <person name="Deshazo D."/>
            <person name="Dhami P."/>
            <person name="Ding Y."/>
            <person name="Dinh H."/>
            <person name="Dodsworth S."/>
            <person name="Draper H."/>
            <person name="Dugan-Rocha S."/>
            <person name="Dunham A."/>
            <person name="Dunn M."/>
            <person name="Durbin K.J."/>
            <person name="Dutta I."/>
            <person name="Eades T."/>
            <person name="Ellwood M."/>
            <person name="Emery-Cohen A."/>
            <person name="Errington H."/>
            <person name="Evans K.L."/>
            <person name="Faulkner L."/>
            <person name="Francis F."/>
            <person name="Frankland J."/>
            <person name="Fraser A.E."/>
            <person name="Galgoczy P."/>
            <person name="Gilbert J."/>
            <person name="Gill R."/>
            <person name="Gloeckner G."/>
            <person name="Gregory S.G."/>
            <person name="Gribble S."/>
            <person name="Griffiths C."/>
            <person name="Grocock R."/>
            <person name="Gu Y."/>
            <person name="Gwilliam R."/>
            <person name="Hamilton C."/>
            <person name="Hart E.A."/>
            <person name="Hawes A."/>
            <person name="Heath P.D."/>
            <person name="Heitmann K."/>
            <person name="Hennig S."/>
            <person name="Hernandez J."/>
            <person name="Hinzmann B."/>
            <person name="Ho S."/>
            <person name="Hoffs M."/>
            <person name="Howden P.J."/>
            <person name="Huckle E.J."/>
            <person name="Hume J."/>
            <person name="Hunt P.J."/>
            <person name="Hunt A.R."/>
            <person name="Isherwood J."/>
            <person name="Jacob L."/>
            <person name="Johnson D."/>
            <person name="Jones S."/>
            <person name="de Jong P.J."/>
            <person name="Joseph S.S."/>
            <person name="Keenan S."/>
            <person name="Kelly S."/>
            <person name="Kershaw J.K."/>
            <person name="Khan Z."/>
            <person name="Kioschis P."/>
            <person name="Klages S."/>
            <person name="Knights A.J."/>
            <person name="Kosiura A."/>
            <person name="Kovar-Smith C."/>
            <person name="Laird G.K."/>
            <person name="Langford C."/>
            <person name="Lawlor S."/>
            <person name="Leversha M."/>
            <person name="Lewis L."/>
            <person name="Liu W."/>
            <person name="Lloyd C."/>
            <person name="Lloyd D.M."/>
            <person name="Loulseged H."/>
            <person name="Loveland J.E."/>
            <person name="Lovell J.D."/>
            <person name="Lozado R."/>
            <person name="Lu J."/>
            <person name="Lyne R."/>
            <person name="Ma J."/>
            <person name="Maheshwari M."/>
            <person name="Matthews L.H."/>
            <person name="McDowall J."/>
            <person name="McLaren S."/>
            <person name="McMurray A."/>
            <person name="Meidl P."/>
            <person name="Meitinger T."/>
            <person name="Milne S."/>
            <person name="Miner G."/>
            <person name="Mistry S.L."/>
            <person name="Morgan M."/>
            <person name="Morris S."/>
            <person name="Mueller I."/>
            <person name="Mullikin J.C."/>
            <person name="Nguyen N."/>
            <person name="Nordsiek G."/>
            <person name="Nyakatura G."/>
            <person name="O'dell C.N."/>
            <person name="Okwuonu G."/>
            <person name="Palmer S."/>
            <person name="Pandian R."/>
            <person name="Parker D."/>
            <person name="Parrish J."/>
            <person name="Pasternak S."/>
            <person name="Patel D."/>
            <person name="Pearce A.V."/>
            <person name="Pearson D.M."/>
            <person name="Pelan S.E."/>
            <person name="Perez L."/>
            <person name="Porter K.M."/>
            <person name="Ramsey Y."/>
            <person name="Reichwald K."/>
            <person name="Rhodes S."/>
            <person name="Ridler K.A."/>
            <person name="Schlessinger D."/>
            <person name="Schueler M.G."/>
            <person name="Sehra H.K."/>
            <person name="Shaw-Smith C."/>
            <person name="Shen H."/>
            <person name="Sheridan E.M."/>
            <person name="Shownkeen R."/>
            <person name="Skuce C.D."/>
            <person name="Smith M.L."/>
            <person name="Sotheran E.C."/>
            <person name="Steingruber H.E."/>
            <person name="Steward C.A."/>
            <person name="Storey R."/>
            <person name="Swann R.M."/>
            <person name="Swarbreck D."/>
            <person name="Tabor P.E."/>
            <person name="Taudien S."/>
            <person name="Taylor T."/>
            <person name="Teague B."/>
            <person name="Thomas K."/>
            <person name="Thorpe A."/>
            <person name="Timms K."/>
            <person name="Tracey A."/>
            <person name="Trevanion S."/>
            <person name="Tromans A.C."/>
            <person name="d'Urso M."/>
            <person name="Verduzco D."/>
            <person name="Villasana D."/>
            <person name="Waldron L."/>
            <person name="Wall M."/>
            <person name="Wang Q."/>
            <person name="Warren J."/>
            <person name="Warry G.L."/>
            <person name="Wei X."/>
            <person name="West A."/>
            <person name="Whitehead S.L."/>
            <person name="Whiteley M.N."/>
            <person name="Wilkinson J.E."/>
            <person name="Willey D.L."/>
            <person name="Williams G."/>
            <person name="Williams L."/>
            <person name="Williamson A."/>
            <person name="Williamson H."/>
            <person name="Wilming L."/>
            <person name="Woodmansey R.L."/>
            <person name="Wray P.W."/>
            <person name="Yen J."/>
            <person name="Zhang J."/>
            <person name="Zhou J."/>
            <person name="Zoghbi H."/>
            <person name="Zorilla S."/>
            <person name="Buck D."/>
            <person name="Reinhardt R."/>
            <person name="Poustka A."/>
            <person name="Rosenthal A."/>
            <person name="Lehrach H."/>
            <person name="Meindl A."/>
            <person name="Minx P.J."/>
            <person name="Hillier L.W."/>
            <person name="Willard H.F."/>
            <person name="Wilson R.K."/>
            <person name="Waterston R.H."/>
            <person name="Rice C.M."/>
            <person name="Vaudin M."/>
            <person name="Coulson A."/>
            <person name="Nelson D.L."/>
            <person name="Weinstock G."/>
            <person name="Sulston J.E."/>
            <person name="Durbin R.M."/>
            <person name="Hubbard T."/>
            <person name="Gibbs R.A."/>
            <person name="Beck S."/>
            <person name="Rogers J."/>
            <person name="Bentley D.R."/>
        </authorList>
    </citation>
    <scope>NUCLEOTIDE SEQUENCE [LARGE SCALE GENOMIC DNA]</scope>
</reference>
<reference key="2">
    <citation type="submission" date="2004-08" db="EMBL/GenBank/DDBJ databases">
        <title>Retroposition dynamics of the human X chromosome.</title>
        <authorList>
            <person name="Wang P.J."/>
            <person name="Skaletsky H."/>
            <person name="Page D.C."/>
        </authorList>
    </citation>
    <scope>NUCLEOTIDE SEQUENCE [MRNA] OF 245-318</scope>
    <source>
        <tissue>Testis</tissue>
    </source>
</reference>
<keyword id="KW-1267">Proteomics identification</keyword>
<keyword id="KW-1185">Reference proteome</keyword>
<proteinExistence type="evidence at protein level"/>
<organism>
    <name type="scientific">Homo sapiens</name>
    <name type="common">Human</name>
    <dbReference type="NCBI Taxonomy" id="9606"/>
    <lineage>
        <taxon>Eukaryota</taxon>
        <taxon>Metazoa</taxon>
        <taxon>Chordata</taxon>
        <taxon>Craniata</taxon>
        <taxon>Vertebrata</taxon>
        <taxon>Euteleostomi</taxon>
        <taxon>Mammalia</taxon>
        <taxon>Eutheria</taxon>
        <taxon>Euarchontoglires</taxon>
        <taxon>Primates</taxon>
        <taxon>Haplorrhini</taxon>
        <taxon>Catarrhini</taxon>
        <taxon>Hominidae</taxon>
        <taxon>Homo</taxon>
    </lineage>
</organism>
<comment type="similarity">
    <text evidence="2">Belongs to the SPT20 family.</text>
</comment>
<sequence length="823" mass="89431">MDRDLEQALDRAENIIEIAQQRPPRRRYSPRAGKTLQEKLYDIYVEECGKEPEDPQELRSNVNLLEKLVRRESLPCLLVNLYPGNQGYSVMLQREDGSFAETIRLPYEERALLDYLDAEELPPALGDVLDKASVNIFHSGCVIVEVRDYRQSSNMQPPGYQSRHILLRPTMQTLAHDVKMMTRDGQKWSQEDKLQLESQLILATAEPLCLDPSVAVACTANRLLYNKQKMNTDPMKRCLQRYSWPSVKPQQEQSDCPPPPELRVSTSGQKEERKVGQPCELNIAKAGSCVDTWKGRPCDLAVPSEVDVEKLAKGYQSVTAADPQLPVWPAQEVEDPFGFALEAGCQAWDTKPSIMQSFNDPLLCGKIRPRKKARQKSQKSPWQPFPDDHSACLRPGSETDAGRAVSQAQESVQSKVKGPGKMSHSSSGPASVSQLSSWKTPEQPDPVWVQSSVSGKGEKHPPPRTQLPSSSGKISSGNSFPPQQAGSPLKPAAPAAAASAAPSHSQKPSVPLIQASRPCPAAQPPTKFIKIAPAIQLRTGSTGLKAINVEGPVQGAQALGSSFKPVQAPGSGAPAPAGISGSDLQSSGGPLPDARPGAVQASSPAPLQFFLNTPEGLRPLTLLQVPQGSAVLTGPQQQSHQLVSLQQLQQPTAAHPPQPGPQGSALGLSTQGQAFPAQQLLKVNPTRARSGLQPQPQPAVLSLLGSAQVPQQGVQLPSVLRQQQPQPQPPKLQLQPQWQPKPRQEQPQSQQQQPQHIQLQTQQLRVLQQPQHIQLQTQQLRVLQQPVFLATGAVQIVQPHPGVQVGSQLVDQRKEGKPTPPAP</sequence>